<gene>
    <name type="primary">CUTA</name>
    <name type="ordered locus">At2g33740</name>
    <name type="ORF">T1B8.5</name>
</gene>
<organism>
    <name type="scientific">Arabidopsis thaliana</name>
    <name type="common">Mouse-ear cress</name>
    <dbReference type="NCBI Taxonomy" id="3702"/>
    <lineage>
        <taxon>Eukaryota</taxon>
        <taxon>Viridiplantae</taxon>
        <taxon>Streptophyta</taxon>
        <taxon>Embryophyta</taxon>
        <taxon>Tracheophyta</taxon>
        <taxon>Spermatophyta</taxon>
        <taxon>Magnoliopsida</taxon>
        <taxon>eudicotyledons</taxon>
        <taxon>Gunneridae</taxon>
        <taxon>Pentapetalae</taxon>
        <taxon>rosids</taxon>
        <taxon>malvids</taxon>
        <taxon>Brassicales</taxon>
        <taxon>Brassicaceae</taxon>
        <taxon>Camelineae</taxon>
        <taxon>Arabidopsis</taxon>
    </lineage>
</organism>
<sequence length="182" mass="19771">MASSLTTRLSAVIGSRRSFPIVGAFCVLSTLSISSLSSSSPFKSGCAQSFSVVPLLRSKFSSKAFSSSIRMEESSKTVPSIVVYVTVPNREAGKKLANSIVQEKLAACVNIVPGIESVYEWEGKVQSDSEELLIIKTRQSLLEPLTEHVNANHEYDVPEVIALPITGGSDKYLEWLKNSTRN</sequence>
<proteinExistence type="evidence at protein level"/>
<reference key="1">
    <citation type="journal article" date="2003" name="Plant J.">
        <title>The Arabidopsis thaliana CUTA gene encodes an evolutionarily conserved copper binding chloroplast protein.</title>
        <authorList>
            <person name="Burkhead J.L."/>
            <person name="Abdel-Ghany S.E."/>
            <person name="Morrill J.M."/>
            <person name="Pilon-Smits E.A."/>
            <person name="Pilon M."/>
        </authorList>
    </citation>
    <scope>NUCLEOTIDE SEQUENCE [MRNA] (ISOFORMS 1 AND 2)</scope>
    <scope>TISSUE SPECIFICITY</scope>
    <scope>SUBCELLULAR LOCATION</scope>
    <scope>SUBUNIT</scope>
    <scope>FUNCTION</scope>
</reference>
<reference key="2">
    <citation type="journal article" date="1999" name="Nature">
        <title>Sequence and analysis of chromosome 2 of the plant Arabidopsis thaliana.</title>
        <authorList>
            <person name="Lin X."/>
            <person name="Kaul S."/>
            <person name="Rounsley S.D."/>
            <person name="Shea T.P."/>
            <person name="Benito M.-I."/>
            <person name="Town C.D."/>
            <person name="Fujii C.Y."/>
            <person name="Mason T.M."/>
            <person name="Bowman C.L."/>
            <person name="Barnstead M.E."/>
            <person name="Feldblyum T.V."/>
            <person name="Buell C.R."/>
            <person name="Ketchum K.A."/>
            <person name="Lee J.J."/>
            <person name="Ronning C.M."/>
            <person name="Koo H.L."/>
            <person name="Moffat K.S."/>
            <person name="Cronin L.A."/>
            <person name="Shen M."/>
            <person name="Pai G."/>
            <person name="Van Aken S."/>
            <person name="Umayam L."/>
            <person name="Tallon L.J."/>
            <person name="Gill J.E."/>
            <person name="Adams M.D."/>
            <person name="Carrera A.J."/>
            <person name="Creasy T.H."/>
            <person name="Goodman H.M."/>
            <person name="Somerville C.R."/>
            <person name="Copenhaver G.P."/>
            <person name="Preuss D."/>
            <person name="Nierman W.C."/>
            <person name="White O."/>
            <person name="Eisen J.A."/>
            <person name="Salzberg S.L."/>
            <person name="Fraser C.M."/>
            <person name="Venter J.C."/>
        </authorList>
    </citation>
    <scope>NUCLEOTIDE SEQUENCE [LARGE SCALE GENOMIC DNA]</scope>
    <source>
        <strain>cv. Columbia</strain>
    </source>
</reference>
<reference key="3">
    <citation type="journal article" date="2017" name="Plant J.">
        <title>Araport11: a complete reannotation of the Arabidopsis thaliana reference genome.</title>
        <authorList>
            <person name="Cheng C.Y."/>
            <person name="Krishnakumar V."/>
            <person name="Chan A.P."/>
            <person name="Thibaud-Nissen F."/>
            <person name="Schobel S."/>
            <person name="Town C.D."/>
        </authorList>
    </citation>
    <scope>GENOME REANNOTATION</scope>
    <source>
        <strain>cv. Columbia</strain>
    </source>
</reference>
<reference key="4">
    <citation type="submission" date="2006-07" db="EMBL/GenBank/DDBJ databases">
        <title>Arabidopsis ORF clones.</title>
        <authorList>
            <person name="Kim C.J."/>
            <person name="Chen H."/>
            <person name="Quinitio C."/>
            <person name="Shinn P."/>
            <person name="Ecker J.R."/>
        </authorList>
    </citation>
    <scope>NUCLEOTIDE SEQUENCE [LARGE SCALE MRNA] (ISOFORM 2)</scope>
    <source>
        <strain>cv. Columbia</strain>
    </source>
</reference>
<dbReference type="EMBL" id="AF327524">
    <property type="protein sequence ID" value="AAK11228.1"/>
    <property type="molecule type" value="mRNA"/>
</dbReference>
<dbReference type="EMBL" id="AF327525">
    <property type="protein sequence ID" value="AAK11229.1"/>
    <property type="molecule type" value="mRNA"/>
</dbReference>
<dbReference type="EMBL" id="U78721">
    <property type="protein sequence ID" value="AAC69129.1"/>
    <property type="molecule type" value="Genomic_DNA"/>
</dbReference>
<dbReference type="EMBL" id="CP002685">
    <property type="protein sequence ID" value="AEC08877.1"/>
    <property type="molecule type" value="Genomic_DNA"/>
</dbReference>
<dbReference type="EMBL" id="CP002685">
    <property type="protein sequence ID" value="AEC08878.1"/>
    <property type="molecule type" value="Genomic_DNA"/>
</dbReference>
<dbReference type="EMBL" id="BT026102">
    <property type="protein sequence ID" value="ABG48458.1"/>
    <property type="molecule type" value="mRNA"/>
</dbReference>
<dbReference type="PIR" id="A84749">
    <property type="entry name" value="A84749"/>
</dbReference>
<dbReference type="RefSeq" id="NP_180930.1">
    <molecule id="P93009-1"/>
    <property type="nucleotide sequence ID" value="NM_128933.4"/>
</dbReference>
<dbReference type="RefSeq" id="NP_850217.1">
    <molecule id="P93009-2"/>
    <property type="nucleotide sequence ID" value="NM_179886.1"/>
</dbReference>
<dbReference type="SMR" id="P93009"/>
<dbReference type="FunCoup" id="P93009">
    <property type="interactions" value="1959"/>
</dbReference>
<dbReference type="STRING" id="3702.P93009"/>
<dbReference type="GlyGen" id="P93009">
    <property type="glycosylation" value="1 site"/>
</dbReference>
<dbReference type="iPTMnet" id="P93009"/>
<dbReference type="PaxDb" id="3702-AT2G33740.2"/>
<dbReference type="ProteomicsDB" id="222724">
    <molecule id="P93009-1"/>
</dbReference>
<dbReference type="EnsemblPlants" id="AT2G33740.1">
    <molecule id="P93009-2"/>
    <property type="protein sequence ID" value="AT2G33740.1"/>
    <property type="gene ID" value="AT2G33740"/>
</dbReference>
<dbReference type="EnsemblPlants" id="AT2G33740.2">
    <molecule id="P93009-1"/>
    <property type="protein sequence ID" value="AT2G33740.2"/>
    <property type="gene ID" value="AT2G33740"/>
</dbReference>
<dbReference type="GeneID" id="817940"/>
<dbReference type="Gramene" id="AT2G33740.1">
    <molecule id="P93009-2"/>
    <property type="protein sequence ID" value="AT2G33740.1"/>
    <property type="gene ID" value="AT2G33740"/>
</dbReference>
<dbReference type="Gramene" id="AT2G33740.2">
    <molecule id="P93009-1"/>
    <property type="protein sequence ID" value="AT2G33740.2"/>
    <property type="gene ID" value="AT2G33740"/>
</dbReference>
<dbReference type="KEGG" id="ath:AT2G33740"/>
<dbReference type="Araport" id="AT2G33740"/>
<dbReference type="TAIR" id="AT2G33740">
    <property type="gene designation" value="CUTA"/>
</dbReference>
<dbReference type="eggNOG" id="KOG3338">
    <property type="taxonomic scope" value="Eukaryota"/>
</dbReference>
<dbReference type="HOGENOM" id="CLU_098807_0_0_1"/>
<dbReference type="InParanoid" id="P93009"/>
<dbReference type="OMA" id="NLQYLEW"/>
<dbReference type="PhylomeDB" id="P93009"/>
<dbReference type="PRO" id="PR:P93009"/>
<dbReference type="Proteomes" id="UP000006548">
    <property type="component" value="Chromosome 2"/>
</dbReference>
<dbReference type="ExpressionAtlas" id="P93009">
    <property type="expression patterns" value="baseline and differential"/>
</dbReference>
<dbReference type="GO" id="GO:0009507">
    <property type="term" value="C:chloroplast"/>
    <property type="evidence" value="ECO:0000314"/>
    <property type="project" value="TAIR"/>
</dbReference>
<dbReference type="GO" id="GO:0031972">
    <property type="term" value="C:chloroplast intermembrane space"/>
    <property type="evidence" value="ECO:0007669"/>
    <property type="project" value="UniProtKB-SubCell"/>
</dbReference>
<dbReference type="GO" id="GO:0005507">
    <property type="term" value="F:copper ion binding"/>
    <property type="evidence" value="ECO:0000314"/>
    <property type="project" value="TAIR"/>
</dbReference>
<dbReference type="GO" id="GO:0010038">
    <property type="term" value="P:response to metal ion"/>
    <property type="evidence" value="ECO:0007669"/>
    <property type="project" value="InterPro"/>
</dbReference>
<dbReference type="FunFam" id="3.30.70.120:FF:000008">
    <property type="entry name" value="Protein CutA 1, chloroplastic"/>
    <property type="match status" value="1"/>
</dbReference>
<dbReference type="Gene3D" id="3.30.70.120">
    <property type="match status" value="1"/>
</dbReference>
<dbReference type="InterPro" id="IPR004323">
    <property type="entry name" value="Ion_tolerance_CutA"/>
</dbReference>
<dbReference type="InterPro" id="IPR011322">
    <property type="entry name" value="N-reg_PII-like_a/b"/>
</dbReference>
<dbReference type="InterPro" id="IPR015867">
    <property type="entry name" value="N-reg_PII/ATP_PRibTrfase_C"/>
</dbReference>
<dbReference type="PANTHER" id="PTHR23419">
    <property type="entry name" value="DIVALENT CATION TOLERANCE CUTA-RELATED"/>
    <property type="match status" value="1"/>
</dbReference>
<dbReference type="PANTHER" id="PTHR23419:SF8">
    <property type="entry name" value="FI09726P"/>
    <property type="match status" value="1"/>
</dbReference>
<dbReference type="Pfam" id="PF03091">
    <property type="entry name" value="CutA1"/>
    <property type="match status" value="1"/>
</dbReference>
<dbReference type="SUPFAM" id="SSF54913">
    <property type="entry name" value="GlnB-like"/>
    <property type="match status" value="1"/>
</dbReference>
<accession>P93009</accession>
<accession>Q147J1</accession>
<accession>Q9C5X6</accession>
<protein>
    <recommendedName>
        <fullName>Protein CutA, chloroplastic</fullName>
    </recommendedName>
    <alternativeName>
        <fullName>Copper-binding protein CutA</fullName>
        <shortName>AtCUTA</shortName>
    </alternativeName>
</protein>
<comment type="function">
    <text evidence="2">Involved in metal homeostasis. Specifically binds Cu(2+). The truncated isoform has less specificity in metal binding.</text>
</comment>
<comment type="subunit">
    <text evidence="2">Homotetramer.</text>
</comment>
<comment type="subcellular location">
    <subcellularLocation>
        <location evidence="2">Plastid</location>
        <location evidence="2">Chloroplast intermembrane space</location>
    </subcellularLocation>
</comment>
<comment type="alternative products">
    <event type="alternative splicing"/>
    <isoform>
        <id>P93009-1</id>
        <name>1</name>
        <sequence type="displayed"/>
    </isoform>
    <isoform>
        <id>P93009-2</id>
        <name>2</name>
        <sequence type="described" ref="VSP_014980 VSP_014981"/>
    </isoform>
</comment>
<comment type="tissue specificity">
    <text evidence="2">Expressed in flowers, leaves, stems and roots.</text>
</comment>
<comment type="domain">
    <text>A central prokaryotic signal-sequence-like domain may be used to export the protein to the chloroplast envelope after import into the stroma.</text>
</comment>
<comment type="miscellaneous">
    <text>Knockout lines indicate that CUTA is not essential for copper tolerance or accumulation.</text>
</comment>
<comment type="similarity">
    <text evidence="5">Belongs to the CutA family.</text>
</comment>
<name>CUTA_ARATH</name>
<evidence type="ECO:0000255" key="1"/>
<evidence type="ECO:0000269" key="2">
    <source>
    </source>
</evidence>
<evidence type="ECO:0000303" key="3">
    <source>
    </source>
</evidence>
<evidence type="ECO:0000303" key="4">
    <source ref="4"/>
</evidence>
<evidence type="ECO:0000305" key="5"/>
<feature type="transit peptide" description="Chloroplast" evidence="1">
    <location>
        <begin position="1"/>
        <end position="70"/>
    </location>
</feature>
<feature type="chain" id="PRO_0000006384" description="Protein CutA, chloroplastic">
    <location>
        <begin position="71"/>
        <end position="182"/>
    </location>
</feature>
<feature type="splice variant" id="VSP_014980" description="In isoform 2." evidence="3 4">
    <original>D</original>
    <variation>E</variation>
    <location>
        <position position="156"/>
    </location>
</feature>
<feature type="splice variant" id="VSP_014981" description="In isoform 2." evidence="3 4">
    <location>
        <begin position="157"/>
        <end position="182"/>
    </location>
</feature>
<keyword id="KW-0025">Alternative splicing</keyword>
<keyword id="KW-0150">Chloroplast</keyword>
<keyword id="KW-0186">Copper</keyword>
<keyword id="KW-0479">Metal-binding</keyword>
<keyword id="KW-0934">Plastid</keyword>
<keyword id="KW-1185">Reference proteome</keyword>
<keyword id="KW-0809">Transit peptide</keyword>